<keyword id="KW-0963">Cytoplasm</keyword>
<keyword id="KW-0346">Stress response</keyword>
<sequence length="105" mass="11779">MIASKFGIGQQVRHSLLGYLGVVVDIDPVYSLSEPSPDELAVNDELRAAPWYHVVMEDDNGLPVHTYLAEAQLSSELQDEHPEQPSMDELAQTIRKQLQAPRLRN</sequence>
<comment type="function">
    <text evidence="1">Involved in the degradation of certain denaturated proteins, including DnaA, during heat shock stress.</text>
</comment>
<comment type="subcellular location">
    <subcellularLocation>
        <location evidence="1">Cytoplasm</location>
    </subcellularLocation>
</comment>
<comment type="similarity">
    <text evidence="1">Belongs to the HspQ family.</text>
</comment>
<comment type="sequence caution" evidence="3">
    <conflict type="erroneous initiation">
        <sequence resource="EMBL-CDS" id="ABG68985"/>
    </conflict>
</comment>
<protein>
    <recommendedName>
        <fullName evidence="1">Heat shock protein HspQ</fullName>
    </recommendedName>
</protein>
<dbReference type="EMBL" id="CP000247">
    <property type="protein sequence ID" value="ABG68985.1"/>
    <property type="status" value="ALT_INIT"/>
    <property type="molecule type" value="Genomic_DNA"/>
</dbReference>
<dbReference type="RefSeq" id="WP_001295356.1">
    <property type="nucleotide sequence ID" value="NC_008253.1"/>
</dbReference>
<dbReference type="SMR" id="Q0TJ94"/>
<dbReference type="GeneID" id="93776448"/>
<dbReference type="KEGG" id="ecp:ECP_0972"/>
<dbReference type="HOGENOM" id="CLU_123865_1_0_6"/>
<dbReference type="Proteomes" id="UP000009182">
    <property type="component" value="Chromosome"/>
</dbReference>
<dbReference type="GO" id="GO:0005737">
    <property type="term" value="C:cytoplasm"/>
    <property type="evidence" value="ECO:0007669"/>
    <property type="project" value="UniProtKB-SubCell"/>
</dbReference>
<dbReference type="GO" id="GO:0003677">
    <property type="term" value="F:DNA binding"/>
    <property type="evidence" value="ECO:0007669"/>
    <property type="project" value="InterPro"/>
</dbReference>
<dbReference type="GO" id="GO:0009408">
    <property type="term" value="P:response to heat"/>
    <property type="evidence" value="ECO:0007669"/>
    <property type="project" value="UniProtKB-UniRule"/>
</dbReference>
<dbReference type="Gene3D" id="2.30.30.390">
    <property type="entry name" value="Hemimethylated DNA-binding domain"/>
    <property type="match status" value="1"/>
</dbReference>
<dbReference type="HAMAP" id="MF_01194">
    <property type="entry name" value="HspQ"/>
    <property type="match status" value="1"/>
</dbReference>
<dbReference type="InterPro" id="IPR011722">
    <property type="entry name" value="Hemimethylated_DNA-bd_dom"/>
</dbReference>
<dbReference type="InterPro" id="IPR036623">
    <property type="entry name" value="Hemimethylated_DNA-bd_sf"/>
</dbReference>
<dbReference type="InterPro" id="IPR022866">
    <property type="entry name" value="HspQ"/>
</dbReference>
<dbReference type="NCBIfam" id="NF010729">
    <property type="entry name" value="PRK14129.1"/>
    <property type="match status" value="1"/>
</dbReference>
<dbReference type="NCBIfam" id="TIGR02097">
    <property type="entry name" value="yccV"/>
    <property type="match status" value="1"/>
</dbReference>
<dbReference type="Pfam" id="PF08755">
    <property type="entry name" value="YccV-like"/>
    <property type="match status" value="1"/>
</dbReference>
<dbReference type="SMART" id="SM00992">
    <property type="entry name" value="YccV-like"/>
    <property type="match status" value="1"/>
</dbReference>
<dbReference type="SUPFAM" id="SSF141255">
    <property type="entry name" value="YccV-like"/>
    <property type="match status" value="1"/>
</dbReference>
<gene>
    <name evidence="1" type="primary">hspQ</name>
    <name type="ordered locus">ECP_0972</name>
</gene>
<reference key="1">
    <citation type="journal article" date="2006" name="Mol. Microbiol.">
        <title>Role of pathogenicity island-associated integrases in the genome plasticity of uropathogenic Escherichia coli strain 536.</title>
        <authorList>
            <person name="Hochhut B."/>
            <person name="Wilde C."/>
            <person name="Balling G."/>
            <person name="Middendorf B."/>
            <person name="Dobrindt U."/>
            <person name="Brzuszkiewicz E."/>
            <person name="Gottschalk G."/>
            <person name="Carniel E."/>
            <person name="Hacker J."/>
        </authorList>
    </citation>
    <scope>NUCLEOTIDE SEQUENCE [LARGE SCALE GENOMIC DNA]</scope>
    <source>
        <strain>536 / UPEC</strain>
    </source>
</reference>
<organism>
    <name type="scientific">Escherichia coli O6:K15:H31 (strain 536 / UPEC)</name>
    <dbReference type="NCBI Taxonomy" id="362663"/>
    <lineage>
        <taxon>Bacteria</taxon>
        <taxon>Pseudomonadati</taxon>
        <taxon>Pseudomonadota</taxon>
        <taxon>Gammaproteobacteria</taxon>
        <taxon>Enterobacterales</taxon>
        <taxon>Enterobacteriaceae</taxon>
        <taxon>Escherichia</taxon>
    </lineage>
</organism>
<feature type="chain" id="PRO_0000315306" description="Heat shock protein HspQ">
    <location>
        <begin position="1"/>
        <end position="105"/>
    </location>
</feature>
<feature type="region of interest" description="Disordered" evidence="2">
    <location>
        <begin position="75"/>
        <end position="105"/>
    </location>
</feature>
<evidence type="ECO:0000255" key="1">
    <source>
        <dbReference type="HAMAP-Rule" id="MF_01194"/>
    </source>
</evidence>
<evidence type="ECO:0000256" key="2">
    <source>
        <dbReference type="SAM" id="MobiDB-lite"/>
    </source>
</evidence>
<evidence type="ECO:0000305" key="3"/>
<name>HSPQ_ECOL5</name>
<accession>Q0TJ94</accession>
<proteinExistence type="inferred from homology"/>